<protein>
    <recommendedName>
        <fullName>Preflagellin peptidase</fullName>
        <shortName>PFP</shortName>
        <ecNumber>3.4.23.52</ecNumber>
    </recommendedName>
</protein>
<sequence>MINFIVGAIGLLIASIYDLKSREIEDYVWVSMVIFGLIYNGYLSFISHDMLYVIQSIVGFIVCFFLGFFMFLLGVGGGDGKLIMGLGALIPKYNMPIHTPLGAILNYLYLPSFPIMVVINAMFFSITLPIIIFLRNVIRGVKPKTKKEVLCMFLGEKMKVSEAIKKERLILGNHENLKLLPSAEKDCDFSKFDKNEEIWVTPAIPFVVPIFLSYLLTSIIGDKIIGIFLSVFGL</sequence>
<dbReference type="EC" id="3.4.23.52"/>
<dbReference type="EMBL" id="L77117">
    <property type="protein sequence ID" value="AAB98907.1"/>
    <property type="status" value="ALT_INIT"/>
    <property type="molecule type" value="Genomic_DNA"/>
</dbReference>
<dbReference type="PIR" id="F64412">
    <property type="entry name" value="F64412"/>
</dbReference>
<dbReference type="RefSeq" id="WP_064496655.1">
    <property type="nucleotide sequence ID" value="NC_000909.1"/>
</dbReference>
<dbReference type="SMR" id="Q58312"/>
<dbReference type="STRING" id="243232.MJ_0902"/>
<dbReference type="MEROPS" id="A24.016"/>
<dbReference type="PaxDb" id="243232-MJ_0902"/>
<dbReference type="EnsemblBacteria" id="AAB98907">
    <property type="protein sequence ID" value="AAB98907"/>
    <property type="gene ID" value="MJ_0902"/>
</dbReference>
<dbReference type="GeneID" id="1451791"/>
<dbReference type="KEGG" id="mja:MJ_0902"/>
<dbReference type="eggNOG" id="arCOG02298">
    <property type="taxonomic scope" value="Archaea"/>
</dbReference>
<dbReference type="HOGENOM" id="CLU_1197648_0_0_2"/>
<dbReference type="InParanoid" id="Q58312"/>
<dbReference type="OrthoDB" id="19094at2157"/>
<dbReference type="Proteomes" id="UP000000805">
    <property type="component" value="Chromosome"/>
</dbReference>
<dbReference type="GO" id="GO:0005886">
    <property type="term" value="C:plasma membrane"/>
    <property type="evidence" value="ECO:0007669"/>
    <property type="project" value="UniProtKB-SubCell"/>
</dbReference>
<dbReference type="GO" id="GO:0004190">
    <property type="term" value="F:aspartic-type endopeptidase activity"/>
    <property type="evidence" value="ECO:0007669"/>
    <property type="project" value="InterPro"/>
</dbReference>
<dbReference type="GO" id="GO:0006508">
    <property type="term" value="P:proteolysis"/>
    <property type="evidence" value="ECO:0007669"/>
    <property type="project" value="UniProtKB-KW"/>
</dbReference>
<dbReference type="Gene3D" id="1.20.120.1220">
    <property type="match status" value="1"/>
</dbReference>
<dbReference type="Gene3D" id="6.10.250.3240">
    <property type="match status" value="1"/>
</dbReference>
<dbReference type="InterPro" id="IPR054964">
    <property type="entry name" value="Arch_preflagellin_pept"/>
</dbReference>
<dbReference type="InterPro" id="IPR052218">
    <property type="entry name" value="Preflagellin_Peptidase"/>
</dbReference>
<dbReference type="InterPro" id="IPR000045">
    <property type="entry name" value="Prepilin_IV_endopep_pep"/>
</dbReference>
<dbReference type="NCBIfam" id="NF040695">
    <property type="entry name" value="FlaK_Arch"/>
    <property type="match status" value="1"/>
</dbReference>
<dbReference type="PANTHER" id="PTHR36506">
    <property type="entry name" value="PREFLAGELLIN PEPTIDASE"/>
    <property type="match status" value="1"/>
</dbReference>
<dbReference type="PANTHER" id="PTHR36506:SF1">
    <property type="entry name" value="PREFLAGELLIN PEPTIDASE"/>
    <property type="match status" value="1"/>
</dbReference>
<dbReference type="Pfam" id="PF01478">
    <property type="entry name" value="Peptidase_A24"/>
    <property type="match status" value="1"/>
</dbReference>
<accession>Q58312</accession>
<proteinExistence type="inferred from homology"/>
<evidence type="ECO:0000250" key="1"/>
<evidence type="ECO:0000305" key="2"/>
<reference key="1">
    <citation type="journal article" date="1996" name="Science">
        <title>Complete genome sequence of the methanogenic archaeon, Methanococcus jannaschii.</title>
        <authorList>
            <person name="Bult C.J."/>
            <person name="White O."/>
            <person name="Olsen G.J."/>
            <person name="Zhou L."/>
            <person name="Fleischmann R.D."/>
            <person name="Sutton G.G."/>
            <person name="Blake J.A."/>
            <person name="FitzGerald L.M."/>
            <person name="Clayton R.A."/>
            <person name="Gocayne J.D."/>
            <person name="Kerlavage A.R."/>
            <person name="Dougherty B.A."/>
            <person name="Tomb J.-F."/>
            <person name="Adams M.D."/>
            <person name="Reich C.I."/>
            <person name="Overbeek R."/>
            <person name="Kirkness E.F."/>
            <person name="Weinstock K.G."/>
            <person name="Merrick J.M."/>
            <person name="Glodek A."/>
            <person name="Scott J.L."/>
            <person name="Geoghagen N.S.M."/>
            <person name="Weidman J.F."/>
            <person name="Fuhrmann J.L."/>
            <person name="Nguyen D."/>
            <person name="Utterback T.R."/>
            <person name="Kelley J.M."/>
            <person name="Peterson J.D."/>
            <person name="Sadow P.W."/>
            <person name="Hanna M.C."/>
            <person name="Cotton M.D."/>
            <person name="Roberts K.M."/>
            <person name="Hurst M.A."/>
            <person name="Kaine B.P."/>
            <person name="Borodovsky M."/>
            <person name="Klenk H.-P."/>
            <person name="Fraser C.M."/>
            <person name="Smith H.O."/>
            <person name="Woese C.R."/>
            <person name="Venter J.C."/>
        </authorList>
    </citation>
    <scope>NUCLEOTIDE SEQUENCE [LARGE SCALE GENOMIC DNA]</scope>
    <source>
        <strain>ATCC 43067 / DSM 2661 / JAL-1 / JCM 10045 / NBRC 100440</strain>
    </source>
</reference>
<organism>
    <name type="scientific">Methanocaldococcus jannaschii (strain ATCC 43067 / DSM 2661 / JAL-1 / JCM 10045 / NBRC 100440)</name>
    <name type="common">Methanococcus jannaschii</name>
    <dbReference type="NCBI Taxonomy" id="243232"/>
    <lineage>
        <taxon>Archaea</taxon>
        <taxon>Methanobacteriati</taxon>
        <taxon>Methanobacteriota</taxon>
        <taxon>Methanomada group</taxon>
        <taxon>Methanococci</taxon>
        <taxon>Methanococcales</taxon>
        <taxon>Methanocaldococcaceae</taxon>
        <taxon>Methanocaldococcus</taxon>
    </lineage>
</organism>
<name>FLAK_METJA</name>
<comment type="function">
    <text evidence="1">Cleaves the N-terminal leader peptide from preflagellins.</text>
</comment>
<comment type="catalytic activity">
    <reaction>
        <text>Cleaves the signal peptide of 3 to 12 amino acids from the N-terminal of preflagellin, usually at Arg-Gly-|- or Lys-Gly-|-, to release flagellin.</text>
        <dbReference type="EC" id="3.4.23.52"/>
    </reaction>
</comment>
<comment type="subcellular location">
    <subcellularLocation>
        <location evidence="1">Cell membrane</location>
        <topology evidence="1">Multi-pass membrane protein</topology>
    </subcellularLocation>
</comment>
<comment type="similarity">
    <text evidence="2">Belongs to the peptidase A24 family. Archaeal preflagellin peptidase subfamily.</text>
</comment>
<comment type="sequence caution" evidence="2">
    <conflict type="erroneous initiation">
        <sequence resource="EMBL-CDS" id="AAB98907"/>
    </conflict>
    <text>Extended N-terminus.</text>
</comment>
<keyword id="KW-1209">Archaeal flagellum biogenesis</keyword>
<keyword id="KW-1003">Cell membrane</keyword>
<keyword id="KW-0378">Hydrolase</keyword>
<keyword id="KW-0472">Membrane</keyword>
<keyword id="KW-0645">Protease</keyword>
<keyword id="KW-1185">Reference proteome</keyword>
<keyword id="KW-0812">Transmembrane</keyword>
<keyword id="KW-1133">Transmembrane helix</keyword>
<gene>
    <name type="primary">flaK</name>
    <name type="ordered locus">MJ0902</name>
</gene>
<feature type="chain" id="PRO_0000107094" description="Preflagellin peptidase">
    <location>
        <begin position="1"/>
        <end position="234"/>
    </location>
</feature>
<feature type="topological domain" description="Cytoplasmic" evidence="1">
    <location>
        <position position="1"/>
    </location>
</feature>
<feature type="transmembrane region" description="Helical" evidence="1">
    <location>
        <begin position="2"/>
        <end position="18"/>
    </location>
</feature>
<feature type="topological domain" description="Extracellular" evidence="1">
    <location>
        <begin position="19"/>
        <end position="23"/>
    </location>
</feature>
<feature type="transmembrane region" description="Helical" evidence="1">
    <location>
        <begin position="24"/>
        <end position="46"/>
    </location>
</feature>
<feature type="topological domain" description="Cytoplasmic" evidence="1">
    <location>
        <begin position="47"/>
        <end position="49"/>
    </location>
</feature>
<feature type="transmembrane region" description="Helical" evidence="1">
    <location>
        <begin position="50"/>
        <end position="72"/>
    </location>
</feature>
<feature type="topological domain" description="Extracellular" evidence="1">
    <location>
        <begin position="73"/>
        <end position="78"/>
    </location>
</feature>
<feature type="transmembrane region" description="Helical" evidence="1">
    <location>
        <begin position="79"/>
        <end position="89"/>
    </location>
</feature>
<feature type="topological domain" description="Cytoplasmic" evidence="1">
    <location>
        <begin position="90"/>
        <end position="110"/>
    </location>
</feature>
<feature type="transmembrane region" description="Helical" evidence="1">
    <location>
        <begin position="111"/>
        <end position="139"/>
    </location>
</feature>
<feature type="topological domain" description="Extracellular" evidence="1">
    <location>
        <begin position="140"/>
        <end position="205"/>
    </location>
</feature>
<feature type="transmembrane region" description="Helical" evidence="1">
    <location>
        <begin position="206"/>
        <end position="217"/>
    </location>
</feature>
<feature type="topological domain" description="Cytoplasmic" evidence="1">
    <location>
        <begin position="218"/>
        <end position="234"/>
    </location>
</feature>
<feature type="site" description="Essential for catalysis" evidence="1">
    <location>
        <position position="18"/>
    </location>
</feature>
<feature type="site" description="Essential for catalysis" evidence="1">
    <location>
        <position position="79"/>
    </location>
</feature>